<protein>
    <recommendedName>
        <fullName evidence="1">DNA mismatch repair protein MutL</fullName>
    </recommendedName>
</protein>
<gene>
    <name evidence="1" type="primary">mutL</name>
    <name type="ordered locus">LCK_01302</name>
</gene>
<keyword id="KW-0227">DNA damage</keyword>
<keyword id="KW-0234">DNA repair</keyword>
<keyword id="KW-1185">Reference proteome</keyword>
<sequence length="668" mass="74932">MGKIHELSNLLANQIAAGEVIERPASVVKELVENAIDAGATQIDIVVENAGETFIRVVDNGAGIDPVDVPLAFTRHATSKITDRHDLFNIVSLGFRGEALPSIAAIADVELRTKTTETTTGLNYHIKGGKEISATPANGRRGTVITVRDLFYNTPARLKYLKKHQTELSKIVDIINRLALSYTGIAFTVSADGRSLLRTTGNGNQQQVIAGIYGRDNAQKMLAIAGENDDFNITGFISLPELTRGSREYLTVLVNGRYIKNFAVSNAVIRGYGSKLMVGRFPMGVININTNPLLIDVNVHPQKSEIRLSKETELAELLVTTIKNRLAEENLIPDAYETLYGQQNKQQNTQNTQNTFTPKAPWIAAEDSMDGHNAEKMSSQPIRRSPSLVTPVEITKREELSSDRVLTFTQKYTNELPQPVFETDNVVEQQVTEPTVTYQSQYSETGSHSQETLPLSEQKPTGFPALDYIGQMHGTFLFAQSEDSFFLIDQHAAQERVNYEFYREQIGQVTNDQQRLLVPITIDYSVSEMLAIADHQPELMALGLRLEPFGATTMIIREHPTWFEKGQEEETVREMTDWLLRDGQLTVAQFREKAAIMMSCKRAIRANMHLSDTAARQLLAHLSMAENPYNCPHGRPVLTQFTLTEMEKMFKRIQESHEKWESYDNHPF</sequence>
<feature type="chain" id="PRO_1000096664" description="DNA mismatch repair protein MutL">
    <location>
        <begin position="1"/>
        <end position="668"/>
    </location>
</feature>
<feature type="region of interest" description="Disordered" evidence="2">
    <location>
        <begin position="437"/>
        <end position="459"/>
    </location>
</feature>
<feature type="compositionally biased region" description="Polar residues" evidence="2">
    <location>
        <begin position="438"/>
        <end position="459"/>
    </location>
</feature>
<evidence type="ECO:0000255" key="1">
    <source>
        <dbReference type="HAMAP-Rule" id="MF_00149"/>
    </source>
</evidence>
<evidence type="ECO:0000256" key="2">
    <source>
        <dbReference type="SAM" id="MobiDB-lite"/>
    </source>
</evidence>
<name>MUTL_LEUCK</name>
<comment type="function">
    <text evidence="1">This protein is involved in the repair of mismatches in DNA. It is required for dam-dependent methyl-directed DNA mismatch repair. May act as a 'molecular matchmaker', a protein that promotes the formation of a stable complex between two or more DNA-binding proteins in an ATP-dependent manner without itself being part of a final effector complex.</text>
</comment>
<comment type="similarity">
    <text evidence="1">Belongs to the DNA mismatch repair MutL/HexB family.</text>
</comment>
<dbReference type="EMBL" id="DQ489736">
    <property type="protein sequence ID" value="ACA83126.1"/>
    <property type="molecule type" value="Genomic_DNA"/>
</dbReference>
<dbReference type="RefSeq" id="WP_004909029.1">
    <property type="nucleotide sequence ID" value="NC_010471.1"/>
</dbReference>
<dbReference type="SMR" id="B1N024"/>
<dbReference type="STRING" id="349519.LCK_01302"/>
<dbReference type="KEGG" id="lci:LCK_01302"/>
<dbReference type="eggNOG" id="COG0323">
    <property type="taxonomic scope" value="Bacteria"/>
</dbReference>
<dbReference type="HOGENOM" id="CLU_004131_4_1_9"/>
<dbReference type="OrthoDB" id="9763467at2"/>
<dbReference type="Proteomes" id="UP000002166">
    <property type="component" value="Chromosome"/>
</dbReference>
<dbReference type="GO" id="GO:0032300">
    <property type="term" value="C:mismatch repair complex"/>
    <property type="evidence" value="ECO:0007669"/>
    <property type="project" value="InterPro"/>
</dbReference>
<dbReference type="GO" id="GO:0005524">
    <property type="term" value="F:ATP binding"/>
    <property type="evidence" value="ECO:0007669"/>
    <property type="project" value="InterPro"/>
</dbReference>
<dbReference type="GO" id="GO:0016887">
    <property type="term" value="F:ATP hydrolysis activity"/>
    <property type="evidence" value="ECO:0007669"/>
    <property type="project" value="InterPro"/>
</dbReference>
<dbReference type="GO" id="GO:0140664">
    <property type="term" value="F:ATP-dependent DNA damage sensor activity"/>
    <property type="evidence" value="ECO:0007669"/>
    <property type="project" value="InterPro"/>
</dbReference>
<dbReference type="GO" id="GO:0030983">
    <property type="term" value="F:mismatched DNA binding"/>
    <property type="evidence" value="ECO:0007669"/>
    <property type="project" value="InterPro"/>
</dbReference>
<dbReference type="GO" id="GO:0006298">
    <property type="term" value="P:mismatch repair"/>
    <property type="evidence" value="ECO:0007669"/>
    <property type="project" value="UniProtKB-UniRule"/>
</dbReference>
<dbReference type="CDD" id="cd16926">
    <property type="entry name" value="HATPase_MutL-MLH-PMS-like"/>
    <property type="match status" value="1"/>
</dbReference>
<dbReference type="CDD" id="cd00782">
    <property type="entry name" value="MutL_Trans"/>
    <property type="match status" value="1"/>
</dbReference>
<dbReference type="FunFam" id="3.30.565.10:FF:000003">
    <property type="entry name" value="DNA mismatch repair endonuclease MutL"/>
    <property type="match status" value="1"/>
</dbReference>
<dbReference type="Gene3D" id="3.30.230.10">
    <property type="match status" value="1"/>
</dbReference>
<dbReference type="Gene3D" id="3.30.565.10">
    <property type="entry name" value="Histidine kinase-like ATPase, C-terminal domain"/>
    <property type="match status" value="1"/>
</dbReference>
<dbReference type="Gene3D" id="3.30.1540.20">
    <property type="entry name" value="MutL, C-terminal domain, dimerisation subdomain"/>
    <property type="match status" value="1"/>
</dbReference>
<dbReference type="Gene3D" id="3.30.1370.100">
    <property type="entry name" value="MutL, C-terminal domain, regulatory subdomain"/>
    <property type="match status" value="1"/>
</dbReference>
<dbReference type="HAMAP" id="MF_00149">
    <property type="entry name" value="DNA_mis_repair"/>
    <property type="match status" value="1"/>
</dbReference>
<dbReference type="InterPro" id="IPR014762">
    <property type="entry name" value="DNA_mismatch_repair_CS"/>
</dbReference>
<dbReference type="InterPro" id="IPR020667">
    <property type="entry name" value="DNA_mismatch_repair_MutL"/>
</dbReference>
<dbReference type="InterPro" id="IPR013507">
    <property type="entry name" value="DNA_mismatch_S5_2-like"/>
</dbReference>
<dbReference type="InterPro" id="IPR036890">
    <property type="entry name" value="HATPase_C_sf"/>
</dbReference>
<dbReference type="InterPro" id="IPR002099">
    <property type="entry name" value="MutL/Mlh/PMS"/>
</dbReference>
<dbReference type="InterPro" id="IPR038973">
    <property type="entry name" value="MutL/Mlh/Pms-like"/>
</dbReference>
<dbReference type="InterPro" id="IPR014790">
    <property type="entry name" value="MutL_C"/>
</dbReference>
<dbReference type="InterPro" id="IPR042120">
    <property type="entry name" value="MutL_C_dimsub"/>
</dbReference>
<dbReference type="InterPro" id="IPR042121">
    <property type="entry name" value="MutL_C_regsub"/>
</dbReference>
<dbReference type="InterPro" id="IPR037198">
    <property type="entry name" value="MutL_C_sf"/>
</dbReference>
<dbReference type="InterPro" id="IPR020568">
    <property type="entry name" value="Ribosomal_Su5_D2-typ_SF"/>
</dbReference>
<dbReference type="InterPro" id="IPR014721">
    <property type="entry name" value="Ribsml_uS5_D2-typ_fold_subgr"/>
</dbReference>
<dbReference type="NCBIfam" id="TIGR00585">
    <property type="entry name" value="mutl"/>
    <property type="match status" value="1"/>
</dbReference>
<dbReference type="NCBIfam" id="NF000950">
    <property type="entry name" value="PRK00095.1-3"/>
    <property type="match status" value="1"/>
</dbReference>
<dbReference type="PANTHER" id="PTHR10073">
    <property type="entry name" value="DNA MISMATCH REPAIR PROTEIN MLH, PMS, MUTL"/>
    <property type="match status" value="1"/>
</dbReference>
<dbReference type="PANTHER" id="PTHR10073:SF12">
    <property type="entry name" value="DNA MISMATCH REPAIR PROTEIN MLH1"/>
    <property type="match status" value="1"/>
</dbReference>
<dbReference type="Pfam" id="PF01119">
    <property type="entry name" value="DNA_mis_repair"/>
    <property type="match status" value="1"/>
</dbReference>
<dbReference type="Pfam" id="PF13589">
    <property type="entry name" value="HATPase_c_3"/>
    <property type="match status" value="1"/>
</dbReference>
<dbReference type="Pfam" id="PF08676">
    <property type="entry name" value="MutL_C"/>
    <property type="match status" value="1"/>
</dbReference>
<dbReference type="SMART" id="SM01340">
    <property type="entry name" value="DNA_mis_repair"/>
    <property type="match status" value="1"/>
</dbReference>
<dbReference type="SMART" id="SM00853">
    <property type="entry name" value="MutL_C"/>
    <property type="match status" value="1"/>
</dbReference>
<dbReference type="SUPFAM" id="SSF55874">
    <property type="entry name" value="ATPase domain of HSP90 chaperone/DNA topoisomerase II/histidine kinase"/>
    <property type="match status" value="1"/>
</dbReference>
<dbReference type="SUPFAM" id="SSF118116">
    <property type="entry name" value="DNA mismatch repair protein MutL"/>
    <property type="match status" value="1"/>
</dbReference>
<dbReference type="SUPFAM" id="SSF54211">
    <property type="entry name" value="Ribosomal protein S5 domain 2-like"/>
    <property type="match status" value="1"/>
</dbReference>
<dbReference type="PROSITE" id="PS00058">
    <property type="entry name" value="DNA_MISMATCH_REPAIR_1"/>
    <property type="match status" value="1"/>
</dbReference>
<organism>
    <name type="scientific">Leuconostoc citreum (strain KM20)</name>
    <dbReference type="NCBI Taxonomy" id="349519"/>
    <lineage>
        <taxon>Bacteria</taxon>
        <taxon>Bacillati</taxon>
        <taxon>Bacillota</taxon>
        <taxon>Bacilli</taxon>
        <taxon>Lactobacillales</taxon>
        <taxon>Lactobacillaceae</taxon>
        <taxon>Leuconostoc</taxon>
    </lineage>
</organism>
<proteinExistence type="inferred from homology"/>
<accession>B1N024</accession>
<reference key="1">
    <citation type="journal article" date="2008" name="J. Bacteriol.">
        <title>Complete genome sequence of Leuconostoc citreum KM20.</title>
        <authorList>
            <person name="Kim J.F."/>
            <person name="Jeong H."/>
            <person name="Lee J.-S."/>
            <person name="Choi S.-H."/>
            <person name="Ha M."/>
            <person name="Hur C.-G."/>
            <person name="Kim J.-S."/>
            <person name="Lee S."/>
            <person name="Park H.-S."/>
            <person name="Park Y.-H."/>
            <person name="Oh T.K."/>
        </authorList>
    </citation>
    <scope>NUCLEOTIDE SEQUENCE [LARGE SCALE GENOMIC DNA]</scope>
    <source>
        <strain>KM20</strain>
    </source>
</reference>